<keyword id="KW-0067">ATP-binding</keyword>
<keyword id="KW-0315">Glutamine amidotransferase</keyword>
<keyword id="KW-0436">Ligase</keyword>
<keyword id="KW-0460">Magnesium</keyword>
<keyword id="KW-0479">Metal-binding</keyword>
<keyword id="KW-0547">Nucleotide-binding</keyword>
<keyword id="KW-0665">Pyrimidine biosynthesis</keyword>
<organism>
    <name type="scientific">Neisseria meningitidis serogroup C / serotype 2a (strain ATCC 700532 / DSM 15464 / FAM18)</name>
    <dbReference type="NCBI Taxonomy" id="272831"/>
    <lineage>
        <taxon>Bacteria</taxon>
        <taxon>Pseudomonadati</taxon>
        <taxon>Pseudomonadota</taxon>
        <taxon>Betaproteobacteria</taxon>
        <taxon>Neisseriales</taxon>
        <taxon>Neisseriaceae</taxon>
        <taxon>Neisseria</taxon>
    </lineage>
</organism>
<name>PYRG_NEIMF</name>
<gene>
    <name evidence="1" type="primary">pyrG</name>
    <name type="ordered locus">NMC1471</name>
</gene>
<evidence type="ECO:0000255" key="1">
    <source>
        <dbReference type="HAMAP-Rule" id="MF_01227"/>
    </source>
</evidence>
<reference key="1">
    <citation type="journal article" date="2007" name="PLoS Genet.">
        <title>Meningococcal genetic variation mechanisms viewed through comparative analysis of serogroup C strain FAM18.</title>
        <authorList>
            <person name="Bentley S.D."/>
            <person name="Vernikos G.S."/>
            <person name="Snyder L.A.S."/>
            <person name="Churcher C."/>
            <person name="Arrowsmith C."/>
            <person name="Chillingworth T."/>
            <person name="Cronin A."/>
            <person name="Davis P.H."/>
            <person name="Holroyd N.E."/>
            <person name="Jagels K."/>
            <person name="Maddison M."/>
            <person name="Moule S."/>
            <person name="Rabbinowitsch E."/>
            <person name="Sharp S."/>
            <person name="Unwin L."/>
            <person name="Whitehead S."/>
            <person name="Quail M.A."/>
            <person name="Achtman M."/>
            <person name="Barrell B.G."/>
            <person name="Saunders N.J."/>
            <person name="Parkhill J."/>
        </authorList>
    </citation>
    <scope>NUCLEOTIDE SEQUENCE [LARGE SCALE GENOMIC DNA]</scope>
    <source>
        <strain>ATCC 700532 / DSM 15464 / FAM18</strain>
    </source>
</reference>
<accession>A1KUX8</accession>
<dbReference type="EC" id="6.3.4.2" evidence="1"/>
<dbReference type="EMBL" id="AM421808">
    <property type="protein sequence ID" value="CAM10677.1"/>
    <property type="molecule type" value="Genomic_DNA"/>
</dbReference>
<dbReference type="RefSeq" id="WP_002220553.1">
    <property type="nucleotide sequence ID" value="NC_008767.1"/>
</dbReference>
<dbReference type="SMR" id="A1KUX8"/>
<dbReference type="KEGG" id="nmc:NMC1471"/>
<dbReference type="HOGENOM" id="CLU_011675_5_0_4"/>
<dbReference type="UniPathway" id="UPA00159">
    <property type="reaction ID" value="UER00277"/>
</dbReference>
<dbReference type="Proteomes" id="UP000002286">
    <property type="component" value="Chromosome"/>
</dbReference>
<dbReference type="GO" id="GO:0005829">
    <property type="term" value="C:cytosol"/>
    <property type="evidence" value="ECO:0007669"/>
    <property type="project" value="TreeGrafter"/>
</dbReference>
<dbReference type="GO" id="GO:0005524">
    <property type="term" value="F:ATP binding"/>
    <property type="evidence" value="ECO:0007669"/>
    <property type="project" value="UniProtKB-KW"/>
</dbReference>
<dbReference type="GO" id="GO:0003883">
    <property type="term" value="F:CTP synthase activity"/>
    <property type="evidence" value="ECO:0007669"/>
    <property type="project" value="UniProtKB-UniRule"/>
</dbReference>
<dbReference type="GO" id="GO:0004359">
    <property type="term" value="F:glutaminase activity"/>
    <property type="evidence" value="ECO:0007669"/>
    <property type="project" value="RHEA"/>
</dbReference>
<dbReference type="GO" id="GO:0042802">
    <property type="term" value="F:identical protein binding"/>
    <property type="evidence" value="ECO:0007669"/>
    <property type="project" value="TreeGrafter"/>
</dbReference>
<dbReference type="GO" id="GO:0046872">
    <property type="term" value="F:metal ion binding"/>
    <property type="evidence" value="ECO:0007669"/>
    <property type="project" value="UniProtKB-KW"/>
</dbReference>
<dbReference type="GO" id="GO:0044210">
    <property type="term" value="P:'de novo' CTP biosynthetic process"/>
    <property type="evidence" value="ECO:0007669"/>
    <property type="project" value="UniProtKB-UniRule"/>
</dbReference>
<dbReference type="GO" id="GO:0019856">
    <property type="term" value="P:pyrimidine nucleobase biosynthetic process"/>
    <property type="evidence" value="ECO:0007669"/>
    <property type="project" value="TreeGrafter"/>
</dbReference>
<dbReference type="CDD" id="cd03113">
    <property type="entry name" value="CTPS_N"/>
    <property type="match status" value="1"/>
</dbReference>
<dbReference type="CDD" id="cd01746">
    <property type="entry name" value="GATase1_CTP_Synthase"/>
    <property type="match status" value="1"/>
</dbReference>
<dbReference type="FunFam" id="3.40.50.300:FF:000009">
    <property type="entry name" value="CTP synthase"/>
    <property type="match status" value="1"/>
</dbReference>
<dbReference type="FunFam" id="3.40.50.880:FF:000002">
    <property type="entry name" value="CTP synthase"/>
    <property type="match status" value="1"/>
</dbReference>
<dbReference type="Gene3D" id="3.40.50.880">
    <property type="match status" value="1"/>
</dbReference>
<dbReference type="Gene3D" id="3.40.50.300">
    <property type="entry name" value="P-loop containing nucleotide triphosphate hydrolases"/>
    <property type="match status" value="1"/>
</dbReference>
<dbReference type="HAMAP" id="MF_01227">
    <property type="entry name" value="PyrG"/>
    <property type="match status" value="1"/>
</dbReference>
<dbReference type="InterPro" id="IPR029062">
    <property type="entry name" value="Class_I_gatase-like"/>
</dbReference>
<dbReference type="InterPro" id="IPR004468">
    <property type="entry name" value="CTP_synthase"/>
</dbReference>
<dbReference type="InterPro" id="IPR017456">
    <property type="entry name" value="CTP_synthase_N"/>
</dbReference>
<dbReference type="InterPro" id="IPR017926">
    <property type="entry name" value="GATASE"/>
</dbReference>
<dbReference type="InterPro" id="IPR033828">
    <property type="entry name" value="GATase1_CTP_Synthase"/>
</dbReference>
<dbReference type="InterPro" id="IPR027417">
    <property type="entry name" value="P-loop_NTPase"/>
</dbReference>
<dbReference type="NCBIfam" id="NF003792">
    <property type="entry name" value="PRK05380.1"/>
    <property type="match status" value="1"/>
</dbReference>
<dbReference type="NCBIfam" id="TIGR00337">
    <property type="entry name" value="PyrG"/>
    <property type="match status" value="1"/>
</dbReference>
<dbReference type="PANTHER" id="PTHR11550">
    <property type="entry name" value="CTP SYNTHASE"/>
    <property type="match status" value="1"/>
</dbReference>
<dbReference type="PANTHER" id="PTHR11550:SF0">
    <property type="entry name" value="CTP SYNTHASE-RELATED"/>
    <property type="match status" value="1"/>
</dbReference>
<dbReference type="Pfam" id="PF06418">
    <property type="entry name" value="CTP_synth_N"/>
    <property type="match status" value="1"/>
</dbReference>
<dbReference type="Pfam" id="PF00117">
    <property type="entry name" value="GATase"/>
    <property type="match status" value="1"/>
</dbReference>
<dbReference type="SUPFAM" id="SSF52317">
    <property type="entry name" value="Class I glutamine amidotransferase-like"/>
    <property type="match status" value="1"/>
</dbReference>
<dbReference type="SUPFAM" id="SSF52540">
    <property type="entry name" value="P-loop containing nucleoside triphosphate hydrolases"/>
    <property type="match status" value="1"/>
</dbReference>
<dbReference type="PROSITE" id="PS51273">
    <property type="entry name" value="GATASE_TYPE_1"/>
    <property type="match status" value="1"/>
</dbReference>
<sequence>MTKFIFVTGGVVSSLGKGIAAASIAAILESRGLNVTMLKLDPYINVDPGTMSPFQHGEVFVTDDGAETDLDLGHYERFIDSTMTRRNSFSTGQVYENVIAKERRGDYLGGTVQVIPHITDEIKRRIHEGAAGYDVAIVEIGGTVGDIESLPFLEAIRQMRSQLGRNNTLFAHLSYVPYIAAAGEIKTKPTQHTVKEMLSIGLQPDILICRMDRTMPADERRKIALFCNVEERAIVGSYDVDSIYECPEMLHDQGIDNIITEQLQLNVQQADLTAWKKIVHAIQNPKHTVKIAMVGKYVDLTESYKSLIEALKHAGIHTETDVQITFVDSESIEKNNGDVSMLKDMDAILVPGGFGSRGVEGKIAAVRYARENNVPYLGICLGMQIALIEYARDVAGLKGANSTEFDLKCAAPVVALIDEWQTADGSVETRDESADLGGTMRLGAQEVELKAGSLAAKIYGSEHIRERHRHRYEVNNNYVPTLEQAGLVIGGVSAGRERLVETIELPNHPWFFACQFHPEFTSNPRKGHPLFTAFVKAALNNKKA</sequence>
<feature type="chain" id="PRO_1000139505" description="CTP synthase">
    <location>
        <begin position="1"/>
        <end position="544"/>
    </location>
</feature>
<feature type="domain" description="Glutamine amidotransferase type-1" evidence="1">
    <location>
        <begin position="290"/>
        <end position="544"/>
    </location>
</feature>
<feature type="region of interest" description="Amidoligase domain" evidence="1">
    <location>
        <begin position="1"/>
        <end position="265"/>
    </location>
</feature>
<feature type="active site" description="Nucleophile; for glutamine hydrolysis" evidence="1">
    <location>
        <position position="380"/>
    </location>
</feature>
<feature type="active site" evidence="1">
    <location>
        <position position="517"/>
    </location>
</feature>
<feature type="active site" evidence="1">
    <location>
        <position position="519"/>
    </location>
</feature>
<feature type="binding site" evidence="1">
    <location>
        <position position="13"/>
    </location>
    <ligand>
        <name>CTP</name>
        <dbReference type="ChEBI" id="CHEBI:37563"/>
        <note>allosteric inhibitor</note>
    </ligand>
</feature>
<feature type="binding site" evidence="1">
    <location>
        <position position="13"/>
    </location>
    <ligand>
        <name>UTP</name>
        <dbReference type="ChEBI" id="CHEBI:46398"/>
    </ligand>
</feature>
<feature type="binding site" evidence="1">
    <location>
        <begin position="14"/>
        <end position="19"/>
    </location>
    <ligand>
        <name>ATP</name>
        <dbReference type="ChEBI" id="CHEBI:30616"/>
    </ligand>
</feature>
<feature type="binding site" evidence="1">
    <location>
        <position position="71"/>
    </location>
    <ligand>
        <name>ATP</name>
        <dbReference type="ChEBI" id="CHEBI:30616"/>
    </ligand>
</feature>
<feature type="binding site" evidence="1">
    <location>
        <position position="71"/>
    </location>
    <ligand>
        <name>Mg(2+)</name>
        <dbReference type="ChEBI" id="CHEBI:18420"/>
    </ligand>
</feature>
<feature type="binding site" evidence="1">
    <location>
        <position position="139"/>
    </location>
    <ligand>
        <name>Mg(2+)</name>
        <dbReference type="ChEBI" id="CHEBI:18420"/>
    </ligand>
</feature>
<feature type="binding site" evidence="1">
    <location>
        <begin position="146"/>
        <end position="148"/>
    </location>
    <ligand>
        <name>CTP</name>
        <dbReference type="ChEBI" id="CHEBI:37563"/>
        <note>allosteric inhibitor</note>
    </ligand>
</feature>
<feature type="binding site" evidence="1">
    <location>
        <begin position="186"/>
        <end position="191"/>
    </location>
    <ligand>
        <name>CTP</name>
        <dbReference type="ChEBI" id="CHEBI:37563"/>
        <note>allosteric inhibitor</note>
    </ligand>
</feature>
<feature type="binding site" evidence="1">
    <location>
        <begin position="186"/>
        <end position="191"/>
    </location>
    <ligand>
        <name>UTP</name>
        <dbReference type="ChEBI" id="CHEBI:46398"/>
    </ligand>
</feature>
<feature type="binding site" evidence="1">
    <location>
        <position position="222"/>
    </location>
    <ligand>
        <name>CTP</name>
        <dbReference type="ChEBI" id="CHEBI:37563"/>
        <note>allosteric inhibitor</note>
    </ligand>
</feature>
<feature type="binding site" evidence="1">
    <location>
        <position position="222"/>
    </location>
    <ligand>
        <name>UTP</name>
        <dbReference type="ChEBI" id="CHEBI:46398"/>
    </ligand>
</feature>
<feature type="binding site" evidence="1">
    <location>
        <position position="353"/>
    </location>
    <ligand>
        <name>L-glutamine</name>
        <dbReference type="ChEBI" id="CHEBI:58359"/>
    </ligand>
</feature>
<feature type="binding site" evidence="1">
    <location>
        <begin position="381"/>
        <end position="384"/>
    </location>
    <ligand>
        <name>L-glutamine</name>
        <dbReference type="ChEBI" id="CHEBI:58359"/>
    </ligand>
</feature>
<feature type="binding site" evidence="1">
    <location>
        <position position="404"/>
    </location>
    <ligand>
        <name>L-glutamine</name>
        <dbReference type="ChEBI" id="CHEBI:58359"/>
    </ligand>
</feature>
<feature type="binding site" evidence="1">
    <location>
        <position position="471"/>
    </location>
    <ligand>
        <name>L-glutamine</name>
        <dbReference type="ChEBI" id="CHEBI:58359"/>
    </ligand>
</feature>
<protein>
    <recommendedName>
        <fullName evidence="1">CTP synthase</fullName>
        <ecNumber evidence="1">6.3.4.2</ecNumber>
    </recommendedName>
    <alternativeName>
        <fullName evidence="1">Cytidine 5'-triphosphate synthase</fullName>
    </alternativeName>
    <alternativeName>
        <fullName evidence="1">Cytidine triphosphate synthetase</fullName>
        <shortName evidence="1">CTP synthetase</shortName>
        <shortName evidence="1">CTPS</shortName>
    </alternativeName>
    <alternativeName>
        <fullName evidence="1">UTP--ammonia ligase</fullName>
    </alternativeName>
</protein>
<comment type="function">
    <text evidence="1">Catalyzes the ATP-dependent amination of UTP to CTP with either L-glutamine or ammonia as the source of nitrogen. Regulates intracellular CTP levels through interactions with the four ribonucleotide triphosphates.</text>
</comment>
<comment type="catalytic activity">
    <reaction evidence="1">
        <text>UTP + L-glutamine + ATP + H2O = CTP + L-glutamate + ADP + phosphate + 2 H(+)</text>
        <dbReference type="Rhea" id="RHEA:26426"/>
        <dbReference type="ChEBI" id="CHEBI:15377"/>
        <dbReference type="ChEBI" id="CHEBI:15378"/>
        <dbReference type="ChEBI" id="CHEBI:29985"/>
        <dbReference type="ChEBI" id="CHEBI:30616"/>
        <dbReference type="ChEBI" id="CHEBI:37563"/>
        <dbReference type="ChEBI" id="CHEBI:43474"/>
        <dbReference type="ChEBI" id="CHEBI:46398"/>
        <dbReference type="ChEBI" id="CHEBI:58359"/>
        <dbReference type="ChEBI" id="CHEBI:456216"/>
        <dbReference type="EC" id="6.3.4.2"/>
    </reaction>
</comment>
<comment type="catalytic activity">
    <reaction evidence="1">
        <text>L-glutamine + H2O = L-glutamate + NH4(+)</text>
        <dbReference type="Rhea" id="RHEA:15889"/>
        <dbReference type="ChEBI" id="CHEBI:15377"/>
        <dbReference type="ChEBI" id="CHEBI:28938"/>
        <dbReference type="ChEBI" id="CHEBI:29985"/>
        <dbReference type="ChEBI" id="CHEBI:58359"/>
    </reaction>
</comment>
<comment type="catalytic activity">
    <reaction evidence="1">
        <text>UTP + NH4(+) + ATP = CTP + ADP + phosphate + 2 H(+)</text>
        <dbReference type="Rhea" id="RHEA:16597"/>
        <dbReference type="ChEBI" id="CHEBI:15378"/>
        <dbReference type="ChEBI" id="CHEBI:28938"/>
        <dbReference type="ChEBI" id="CHEBI:30616"/>
        <dbReference type="ChEBI" id="CHEBI:37563"/>
        <dbReference type="ChEBI" id="CHEBI:43474"/>
        <dbReference type="ChEBI" id="CHEBI:46398"/>
        <dbReference type="ChEBI" id="CHEBI:456216"/>
    </reaction>
</comment>
<comment type="activity regulation">
    <text evidence="1">Allosterically activated by GTP, when glutamine is the substrate; GTP has no effect on the reaction when ammonia is the substrate. The allosteric effector GTP functions by stabilizing the protein conformation that binds the tetrahedral intermediate(s) formed during glutamine hydrolysis. Inhibited by the product CTP, via allosteric rather than competitive inhibition.</text>
</comment>
<comment type="pathway">
    <text evidence="1">Pyrimidine metabolism; CTP biosynthesis via de novo pathway; CTP from UDP: step 2/2.</text>
</comment>
<comment type="subunit">
    <text evidence="1">Homotetramer.</text>
</comment>
<comment type="miscellaneous">
    <text evidence="1">CTPSs have evolved a hybrid strategy for distinguishing between UTP and CTP. The overlapping regions of the product feedback inhibitory and substrate sites recognize a common feature in both compounds, the triphosphate moiety. To differentiate isosteric substrate and product pyrimidine rings, an additional pocket far from the expected kinase/ligase catalytic site, specifically recognizes the cytosine and ribose portions of the product inhibitor.</text>
</comment>
<comment type="similarity">
    <text evidence="1">Belongs to the CTP synthase family.</text>
</comment>
<proteinExistence type="inferred from homology"/>